<gene>
    <name type="ordered locus">Rv2271</name>
    <name type="ORF">MTCY339.39c</name>
</gene>
<proteinExistence type="evidence at protein level"/>
<protein>
    <recommendedName>
        <fullName>Uncharacterized protein Rv2271</fullName>
    </recommendedName>
</protein>
<feature type="chain" id="PRO_0000103997" description="Uncharacterized protein Rv2271">
    <location>
        <begin position="1"/>
        <end position="99"/>
    </location>
</feature>
<keyword id="KW-1185">Reference proteome</keyword>
<reference key="1">
    <citation type="journal article" date="1998" name="Nature">
        <title>Deciphering the biology of Mycobacterium tuberculosis from the complete genome sequence.</title>
        <authorList>
            <person name="Cole S.T."/>
            <person name="Brosch R."/>
            <person name="Parkhill J."/>
            <person name="Garnier T."/>
            <person name="Churcher C.M."/>
            <person name="Harris D.E."/>
            <person name="Gordon S.V."/>
            <person name="Eiglmeier K."/>
            <person name="Gas S."/>
            <person name="Barry C.E. III"/>
            <person name="Tekaia F."/>
            <person name="Badcock K."/>
            <person name="Basham D."/>
            <person name="Brown D."/>
            <person name="Chillingworth T."/>
            <person name="Connor R."/>
            <person name="Davies R.M."/>
            <person name="Devlin K."/>
            <person name="Feltwell T."/>
            <person name="Gentles S."/>
            <person name="Hamlin N."/>
            <person name="Holroyd S."/>
            <person name="Hornsby T."/>
            <person name="Jagels K."/>
            <person name="Krogh A."/>
            <person name="McLean J."/>
            <person name="Moule S."/>
            <person name="Murphy L.D."/>
            <person name="Oliver S."/>
            <person name="Osborne J."/>
            <person name="Quail M.A."/>
            <person name="Rajandream M.A."/>
            <person name="Rogers J."/>
            <person name="Rutter S."/>
            <person name="Seeger K."/>
            <person name="Skelton S."/>
            <person name="Squares S."/>
            <person name="Squares R."/>
            <person name="Sulston J.E."/>
            <person name="Taylor K."/>
            <person name="Whitehead S."/>
            <person name="Barrell B.G."/>
        </authorList>
    </citation>
    <scope>NUCLEOTIDE SEQUENCE [LARGE SCALE GENOMIC DNA]</scope>
    <source>
        <strain>ATCC 25618 / H37Rv</strain>
    </source>
</reference>
<reference key="2">
    <citation type="journal article" date="2011" name="Mol. Cell. Proteomics">
        <title>Proteogenomic analysis of Mycobacterium tuberculosis by high resolution mass spectrometry.</title>
        <authorList>
            <person name="Kelkar D.S."/>
            <person name="Kumar D."/>
            <person name="Kumar P."/>
            <person name="Balakrishnan L."/>
            <person name="Muthusamy B."/>
            <person name="Yadav A.K."/>
            <person name="Shrivastava P."/>
            <person name="Marimuthu A."/>
            <person name="Anand S."/>
            <person name="Sundaram H."/>
            <person name="Kingsbury R."/>
            <person name="Harsha H.C."/>
            <person name="Nair B."/>
            <person name="Prasad T.S."/>
            <person name="Chauhan D.S."/>
            <person name="Katoch K."/>
            <person name="Katoch V.M."/>
            <person name="Kumar P."/>
            <person name="Chaerkady R."/>
            <person name="Ramachandran S."/>
            <person name="Dash D."/>
            <person name="Pandey A."/>
        </authorList>
    </citation>
    <scope>IDENTIFICATION BY MASS SPECTROMETRY [LARGE SCALE ANALYSIS]</scope>
    <source>
        <strain>ATCC 25618 / H37Rv</strain>
    </source>
</reference>
<sequence>MTTPPDKARRRFLRDAYKNAERVARTALLTIDQDQLEQLLDYVDERLGEQPCDHTARHAQRWAQSHRIEWETLAEGLQEFGGYCDCEIVMNVEPEAIFG</sequence>
<accession>P9WLF7</accession>
<accession>L0TBT1</accession>
<accession>P64967</accession>
<accession>Q50692</accession>
<organism>
    <name type="scientific">Mycobacterium tuberculosis (strain ATCC 25618 / H37Rv)</name>
    <dbReference type="NCBI Taxonomy" id="83332"/>
    <lineage>
        <taxon>Bacteria</taxon>
        <taxon>Bacillati</taxon>
        <taxon>Actinomycetota</taxon>
        <taxon>Actinomycetes</taxon>
        <taxon>Mycobacteriales</taxon>
        <taxon>Mycobacteriaceae</taxon>
        <taxon>Mycobacterium</taxon>
        <taxon>Mycobacterium tuberculosis complex</taxon>
    </lineage>
</organism>
<dbReference type="EMBL" id="AL123456">
    <property type="protein sequence ID" value="CCP45052.1"/>
    <property type="molecule type" value="Genomic_DNA"/>
</dbReference>
<dbReference type="PIR" id="C70730">
    <property type="entry name" value="C70730"/>
</dbReference>
<dbReference type="RefSeq" id="NP_216787.1">
    <property type="nucleotide sequence ID" value="NC_000962.3"/>
</dbReference>
<dbReference type="RefSeq" id="WP_003899242.1">
    <property type="nucleotide sequence ID" value="NZ_NVQJ01000008.1"/>
</dbReference>
<dbReference type="SMR" id="P9WLF7"/>
<dbReference type="STRING" id="83332.Rv2271"/>
<dbReference type="PaxDb" id="83332-Rv2271"/>
<dbReference type="DNASU" id="887223"/>
<dbReference type="GeneID" id="887223"/>
<dbReference type="KEGG" id="mtu:Rv2271"/>
<dbReference type="KEGG" id="mtv:RVBD_2271"/>
<dbReference type="TubercuList" id="Rv2271"/>
<dbReference type="eggNOG" id="ENOG5031VJF">
    <property type="taxonomic scope" value="Bacteria"/>
</dbReference>
<dbReference type="InParanoid" id="P9WLF7"/>
<dbReference type="OrthoDB" id="95751at2"/>
<dbReference type="Proteomes" id="UP000001584">
    <property type="component" value="Chromosome"/>
</dbReference>
<dbReference type="InterPro" id="IPR024248">
    <property type="entry name" value="DUF2695"/>
</dbReference>
<dbReference type="Pfam" id="PF10905">
    <property type="entry name" value="DUF2695"/>
    <property type="match status" value="1"/>
</dbReference>
<name>Y2271_MYCTU</name>